<proteinExistence type="evidence at transcript level"/>
<dbReference type="EMBL" id="AF072657">
    <property type="protein sequence ID" value="AAC96103.1"/>
    <property type="molecule type" value="mRNA"/>
</dbReference>
<dbReference type="SMR" id="O93375"/>
<dbReference type="FunCoup" id="O93375">
    <property type="interactions" value="41"/>
</dbReference>
<dbReference type="STRING" id="7955.ENSDARP00000009986"/>
<dbReference type="PaxDb" id="7955-ENSDARP00000009986"/>
<dbReference type="AGR" id="ZFIN:ZDB-GENE-990715-11"/>
<dbReference type="ZFIN" id="ZDB-GENE-990715-11">
    <property type="gene designation" value="ebf2"/>
</dbReference>
<dbReference type="eggNOG" id="KOG3836">
    <property type="taxonomic scope" value="Eukaryota"/>
</dbReference>
<dbReference type="InParanoid" id="O93375"/>
<dbReference type="PhylomeDB" id="O93375"/>
<dbReference type="PRO" id="PR:O93375"/>
<dbReference type="Proteomes" id="UP000000437">
    <property type="component" value="Unplaced"/>
</dbReference>
<dbReference type="GO" id="GO:0005634">
    <property type="term" value="C:nucleus"/>
    <property type="evidence" value="ECO:0007669"/>
    <property type="project" value="UniProtKB-SubCell"/>
</dbReference>
<dbReference type="GO" id="GO:0000981">
    <property type="term" value="F:DNA-binding transcription factor activity, RNA polymerase II-specific"/>
    <property type="evidence" value="ECO:0000318"/>
    <property type="project" value="GO_Central"/>
</dbReference>
<dbReference type="GO" id="GO:0000978">
    <property type="term" value="F:RNA polymerase II cis-regulatory region sequence-specific DNA binding"/>
    <property type="evidence" value="ECO:0000318"/>
    <property type="project" value="GO_Central"/>
</dbReference>
<dbReference type="GO" id="GO:0008270">
    <property type="term" value="F:zinc ion binding"/>
    <property type="evidence" value="ECO:0007669"/>
    <property type="project" value="UniProtKB-KW"/>
</dbReference>
<dbReference type="GO" id="GO:0007399">
    <property type="term" value="P:nervous system development"/>
    <property type="evidence" value="ECO:0007669"/>
    <property type="project" value="UniProtKB-ARBA"/>
</dbReference>
<dbReference type="GO" id="GO:0006357">
    <property type="term" value="P:regulation of transcription by RNA polymerase II"/>
    <property type="evidence" value="ECO:0000318"/>
    <property type="project" value="GO_Central"/>
</dbReference>
<dbReference type="CDD" id="cd11606">
    <property type="entry name" value="COE_DBD"/>
    <property type="match status" value="1"/>
</dbReference>
<dbReference type="CDD" id="cd01175">
    <property type="entry name" value="IPT_COE"/>
    <property type="match status" value="1"/>
</dbReference>
<dbReference type="FunFam" id="1.10.287.4280:FF:000001">
    <property type="entry name" value="transcription factor COE1 isoform X2"/>
    <property type="match status" value="1"/>
</dbReference>
<dbReference type="FunFam" id="2.60.40.10:FF:000021">
    <property type="entry name" value="transcription factor COE1 isoform X2"/>
    <property type="match status" value="1"/>
</dbReference>
<dbReference type="FunFam" id="2.60.40.3180:FF:000002">
    <property type="entry name" value="transcription factor COE2 isoform X1"/>
    <property type="match status" value="1"/>
</dbReference>
<dbReference type="Gene3D" id="1.10.287.4280">
    <property type="match status" value="1"/>
</dbReference>
<dbReference type="Gene3D" id="2.60.40.10">
    <property type="entry name" value="Immunoglobulins"/>
    <property type="match status" value="1"/>
</dbReference>
<dbReference type="Gene3D" id="2.60.40.3180">
    <property type="entry name" value="Transcription factor COE1, DNA-binding domain"/>
    <property type="match status" value="1"/>
</dbReference>
<dbReference type="InterPro" id="IPR032200">
    <property type="entry name" value="COE_DBD"/>
</dbReference>
<dbReference type="InterPro" id="IPR038173">
    <property type="entry name" value="COE_DBD_sf"/>
</dbReference>
<dbReference type="InterPro" id="IPR032201">
    <property type="entry name" value="COE_HLH"/>
</dbReference>
<dbReference type="InterPro" id="IPR038006">
    <property type="entry name" value="COE_IPT"/>
</dbReference>
<dbReference type="InterPro" id="IPR013783">
    <property type="entry name" value="Ig-like_fold"/>
</dbReference>
<dbReference type="InterPro" id="IPR014756">
    <property type="entry name" value="Ig_E-set"/>
</dbReference>
<dbReference type="InterPro" id="IPR002909">
    <property type="entry name" value="IPT_dom"/>
</dbReference>
<dbReference type="InterPro" id="IPR003523">
    <property type="entry name" value="Transcription_factor_COE"/>
</dbReference>
<dbReference type="InterPro" id="IPR018350">
    <property type="entry name" value="Transcription_factor_COE_CS"/>
</dbReference>
<dbReference type="PANTHER" id="PTHR10747">
    <property type="entry name" value="TRANSCRIPTION FACTOR COE FAMILY MEMBER"/>
    <property type="match status" value="1"/>
</dbReference>
<dbReference type="Pfam" id="PF16422">
    <property type="entry name" value="COE1_DBD"/>
    <property type="match status" value="1"/>
</dbReference>
<dbReference type="Pfam" id="PF16423">
    <property type="entry name" value="COE1_HLH"/>
    <property type="match status" value="1"/>
</dbReference>
<dbReference type="Pfam" id="PF01833">
    <property type="entry name" value="TIG"/>
    <property type="match status" value="1"/>
</dbReference>
<dbReference type="SMART" id="SM00429">
    <property type="entry name" value="IPT"/>
    <property type="match status" value="1"/>
</dbReference>
<dbReference type="SUPFAM" id="SSF81296">
    <property type="entry name" value="E set domains"/>
    <property type="match status" value="1"/>
</dbReference>
<dbReference type="PROSITE" id="PS01345">
    <property type="entry name" value="COE"/>
    <property type="match status" value="1"/>
</dbReference>
<sequence length="579" mass="63528">MFESQDHSIRTITELKVRTFEEEMDPVRSWVRNVGVIDANIAAQSGVALSRAHFEKQPPSNLRKSNFFHFVLALYDRNGQPVEVERTSFVDFVEQDKTGEKTNNGTHYKLQLLYSNGVRTEQDLYARLIDSVTKQPISYEGQNKNPEMCRVLLTHEVMCSRCCEKKSCGNRNETPSDPVIIDRFFLKFFLKCNQNCLKTAGNPRDMRRFQVVLSTTVCVDGPVLAISDNMFVHNNSKHGRRSRRMDPNETVENNMEYATPCIKAISPSEGWTTGGAMVIVIGENFFDGLQVVFGSMLVWSELITPHAIRVQTPPRHIPGVVEVTLSYKSKQFCKGAPGRFIYTALNEPTIDYGFQRLQKLIPRHPGDPDKLAKEMLLKRAADVVESLYGNTTSNQDMLLKRAADIAEALYSVPRPHSQLQAMPSSPVHGSVMGLSSYPTQLGVSIGEPGQTSGQGYTRNSSSLSPRGYPSSSTPQQSAYGSNGGMSYGAVPMSSLGVSGSPGFNSASPNSSPYAIMPSSPPGSSSSSSLLPFSSFPSSTKQKSAFAPVLRPQGFPHHPSAKTSGGTSFRAMTGLVVPPM</sequence>
<organism>
    <name type="scientific">Danio rerio</name>
    <name type="common">Zebrafish</name>
    <name type="synonym">Brachydanio rerio</name>
    <dbReference type="NCBI Taxonomy" id="7955"/>
    <lineage>
        <taxon>Eukaryota</taxon>
        <taxon>Metazoa</taxon>
        <taxon>Chordata</taxon>
        <taxon>Craniata</taxon>
        <taxon>Vertebrata</taxon>
        <taxon>Euteleostomi</taxon>
        <taxon>Actinopterygii</taxon>
        <taxon>Neopterygii</taxon>
        <taxon>Teleostei</taxon>
        <taxon>Ostariophysi</taxon>
        <taxon>Cypriniformes</taxon>
        <taxon>Danionidae</taxon>
        <taxon>Danioninae</taxon>
        <taxon>Danio</taxon>
    </lineage>
</organism>
<keyword id="KW-0217">Developmental protein</keyword>
<keyword id="KW-0238">DNA-binding</keyword>
<keyword id="KW-0479">Metal-binding</keyword>
<keyword id="KW-0539">Nucleus</keyword>
<keyword id="KW-1185">Reference proteome</keyword>
<keyword id="KW-0804">Transcription</keyword>
<keyword id="KW-0805">Transcription regulation</keyword>
<keyword id="KW-0862">Zinc</keyword>
<keyword id="KW-0863">Zinc-finger</keyword>
<name>COE2_DANRE</name>
<gene>
    <name type="primary">coe2</name>
</gene>
<protein>
    <recommendedName>
        <fullName>Transcription factor COE2</fullName>
    </recommendedName>
</protein>
<accession>O93375</accession>
<comment type="subcellular location">
    <subcellularLocation>
        <location evidence="4">Nucleus</location>
    </subcellularLocation>
</comment>
<comment type="developmental stage">
    <text>First detected at the 75% epiboly stage where it covers the anterior neural plate. Widely expressed in the presumptive mesencephalon and rhombomeres 1-4 until the 2-3-somite stage, with expression persisting in ngn1-positive clusters. First detected in the olfactory placodes at the 5-somite stage. In the spinal cord, detected in ngn1-positive clusters of primary neuroblasts during the early somite stages. Expression decreases in the spinal cord from the 30-somite stage but persists in the olfactory bulb and regions of the rhombencephalon and brain.</text>
</comment>
<comment type="similarity">
    <text evidence="4">Belongs to the COE family.</text>
</comment>
<feature type="chain" id="PRO_0000107830" description="Transcription factor COE2">
    <location>
        <begin position="1"/>
        <end position="579"/>
    </location>
</feature>
<feature type="domain" description="IPT/TIG">
    <location>
        <begin position="260"/>
        <end position="343"/>
    </location>
</feature>
<feature type="zinc finger region" description="C5-type" evidence="2">
    <location>
        <begin position="149"/>
        <end position="168"/>
    </location>
</feature>
<feature type="region of interest" description="Interaction with DNA" evidence="1">
    <location>
        <begin position="63"/>
        <end position="66"/>
    </location>
</feature>
<feature type="region of interest" description="Interaction with DNA" evidence="1">
    <location>
        <begin position="195"/>
        <end position="202"/>
    </location>
</feature>
<feature type="region of interest" description="Interaction with DNA" evidence="1">
    <location>
        <begin position="234"/>
        <end position="237"/>
    </location>
</feature>
<feature type="region of interest" description="Disordered" evidence="3">
    <location>
        <begin position="442"/>
        <end position="482"/>
    </location>
</feature>
<feature type="region of interest" description="Disordered" evidence="3">
    <location>
        <begin position="514"/>
        <end position="533"/>
    </location>
</feature>
<feature type="region of interest" description="Disordered" evidence="3">
    <location>
        <begin position="549"/>
        <end position="579"/>
    </location>
</feature>
<feature type="compositionally biased region" description="Polar residues" evidence="3">
    <location>
        <begin position="449"/>
        <end position="459"/>
    </location>
</feature>
<feature type="compositionally biased region" description="Low complexity" evidence="3">
    <location>
        <begin position="460"/>
        <end position="472"/>
    </location>
</feature>
<feature type="compositionally biased region" description="Low complexity" evidence="3">
    <location>
        <begin position="521"/>
        <end position="533"/>
    </location>
</feature>
<feature type="site" description="Interaction with DNA" evidence="1">
    <location>
        <position position="161"/>
    </location>
</feature>
<feature type="site" description="Interaction with DNA" evidence="1">
    <location>
        <position position="170"/>
    </location>
</feature>
<reference key="1">
    <citation type="journal article" date="1998" name="Mech. Dev.">
        <title>Molecular cloning of Zcoe2, the zebrafish homolog of Xenopus Xcoe2 and mouse EBF-2, and its expression during primary neurogenesis.</title>
        <authorList>
            <person name="Bally-Cuif L."/>
            <person name="Dubois L."/>
            <person name="Vincent A."/>
        </authorList>
    </citation>
    <scope>NUCLEOTIDE SEQUENCE [MRNA]</scope>
</reference>
<evidence type="ECO:0000250" key="1"/>
<evidence type="ECO:0000255" key="2"/>
<evidence type="ECO:0000256" key="3">
    <source>
        <dbReference type="SAM" id="MobiDB-lite"/>
    </source>
</evidence>
<evidence type="ECO:0000305" key="4"/>